<proteinExistence type="inferred from homology"/>
<evidence type="ECO:0000255" key="1">
    <source>
        <dbReference type="HAMAP-Rule" id="MF_01595"/>
    </source>
</evidence>
<comment type="function">
    <text evidence="1">Involved in mRNA degradation. Catalyzes the phosphorolysis of single-stranded polyribonucleotides processively in the 3'- to 5'-direction.</text>
</comment>
<comment type="catalytic activity">
    <reaction evidence="1">
        <text>RNA(n+1) + phosphate = RNA(n) + a ribonucleoside 5'-diphosphate</text>
        <dbReference type="Rhea" id="RHEA:22096"/>
        <dbReference type="Rhea" id="RHEA-COMP:14527"/>
        <dbReference type="Rhea" id="RHEA-COMP:17342"/>
        <dbReference type="ChEBI" id="CHEBI:43474"/>
        <dbReference type="ChEBI" id="CHEBI:57930"/>
        <dbReference type="ChEBI" id="CHEBI:140395"/>
        <dbReference type="EC" id="2.7.7.8"/>
    </reaction>
</comment>
<comment type="cofactor">
    <cofactor evidence="1">
        <name>Mg(2+)</name>
        <dbReference type="ChEBI" id="CHEBI:18420"/>
    </cofactor>
</comment>
<comment type="subcellular location">
    <subcellularLocation>
        <location evidence="1">Cytoplasm</location>
    </subcellularLocation>
</comment>
<comment type="similarity">
    <text evidence="1">Belongs to the polyribonucleotide nucleotidyltransferase family.</text>
</comment>
<organism>
    <name type="scientific">Bacillus cereus (strain AH820)</name>
    <dbReference type="NCBI Taxonomy" id="405535"/>
    <lineage>
        <taxon>Bacteria</taxon>
        <taxon>Bacillati</taxon>
        <taxon>Bacillota</taxon>
        <taxon>Bacilli</taxon>
        <taxon>Bacillales</taxon>
        <taxon>Bacillaceae</taxon>
        <taxon>Bacillus</taxon>
        <taxon>Bacillus cereus group</taxon>
    </lineage>
</organism>
<protein>
    <recommendedName>
        <fullName evidence="1">Polyribonucleotide nucleotidyltransferase</fullName>
        <ecNumber evidence="1">2.7.7.8</ecNumber>
    </recommendedName>
    <alternativeName>
        <fullName evidence="1">Polynucleotide phosphorylase</fullName>
        <shortName evidence="1">PNPase</shortName>
    </alternativeName>
</protein>
<name>PNP_BACC0</name>
<feature type="chain" id="PRO_1000147883" description="Polyribonucleotide nucleotidyltransferase">
    <location>
        <begin position="1"/>
        <end position="712"/>
    </location>
</feature>
<feature type="domain" description="KH" evidence="1">
    <location>
        <begin position="554"/>
        <end position="613"/>
    </location>
</feature>
<feature type="domain" description="S1 motif" evidence="1">
    <location>
        <begin position="623"/>
        <end position="691"/>
    </location>
</feature>
<feature type="binding site" evidence="1">
    <location>
        <position position="487"/>
    </location>
    <ligand>
        <name>Mg(2+)</name>
        <dbReference type="ChEBI" id="CHEBI:18420"/>
    </ligand>
</feature>
<feature type="binding site" evidence="1">
    <location>
        <position position="493"/>
    </location>
    <ligand>
        <name>Mg(2+)</name>
        <dbReference type="ChEBI" id="CHEBI:18420"/>
    </ligand>
</feature>
<sequence length="712" mass="78239">MSQEKQVFSIDLAGRQLTVETGQLAKQANGAVLVRYGDTAVLSTATASKEAKNVDFFPLTVNYEERLYAVGKIPGGFIKREGRPSEKAILASRLIDRPIRPLFADGFRNEVQVVSIVMSVDQDCSSEMAAMLGSSLALSISDIPFEGPIAGATVGRINGEFVINPTVEQQEQSDIHLVVAGTKDAINMVEAGADQVPEETMLEAIMFGHDEIKRLIAFQEEIVQAVGKEKSEVKLYEVDADLNQAVREMAEKDMHSAIQVHEKHAREDAINEVKKRVIEHYEAQEADADTLGQVNEILYKIVKEEVRRLITVEKIRPDGRKGDEIRPLASEVGILSRTHGSGLFTRGQTQALSICTLGALGDVQILDGLGVEESKRFMHHYNFPSFSVGETRPMRGPGRREIGHGALGERALEPVIPSEKDFPYTVRLVSEVLESNGSTSQASICGSTLAMMDAGVPLKAPVAGIAMGLVKTGEHYTILSDIQGMEDHLGDMDFKVAGTAHGVTALQMDIKIDGLSREILEEALQQAKVGRVHILNHMLSVIAEPRTELSAYAPKIITMTINPDKIRDVIGPSGKQINKIIEETGVKIDIEQDGTVFISSINQEMNDKAKKIIEDIVREVQVGEIYEGKVKRVEKFGAFVELFSDKDGLVHISELALERVGKVEDVVKIGDVITVKVIEIDKQGRVNLSRKVLLKEEQEKEAAKEENKQEQQ</sequence>
<reference key="1">
    <citation type="submission" date="2008-10" db="EMBL/GenBank/DDBJ databases">
        <title>Genome sequence of Bacillus cereus AH820.</title>
        <authorList>
            <person name="Dodson R.J."/>
            <person name="Durkin A.S."/>
            <person name="Rosovitz M.J."/>
            <person name="Rasko D.A."/>
            <person name="Hoffmaster A."/>
            <person name="Ravel J."/>
            <person name="Sutton G."/>
        </authorList>
    </citation>
    <scope>NUCLEOTIDE SEQUENCE [LARGE SCALE GENOMIC DNA]</scope>
    <source>
        <strain>AH820</strain>
    </source>
</reference>
<accession>B7JJ84</accession>
<dbReference type="EC" id="2.7.7.8" evidence="1"/>
<dbReference type="EMBL" id="CP001283">
    <property type="protein sequence ID" value="ACK92044.1"/>
    <property type="molecule type" value="Genomic_DNA"/>
</dbReference>
<dbReference type="RefSeq" id="WP_000076749.1">
    <property type="nucleotide sequence ID" value="NC_011773.1"/>
</dbReference>
<dbReference type="SMR" id="B7JJ84"/>
<dbReference type="KEGG" id="bcu:BCAH820_3818"/>
<dbReference type="HOGENOM" id="CLU_004217_2_2_9"/>
<dbReference type="Proteomes" id="UP000001363">
    <property type="component" value="Chromosome"/>
</dbReference>
<dbReference type="GO" id="GO:0005829">
    <property type="term" value="C:cytosol"/>
    <property type="evidence" value="ECO:0007669"/>
    <property type="project" value="TreeGrafter"/>
</dbReference>
<dbReference type="GO" id="GO:0000175">
    <property type="term" value="F:3'-5'-RNA exonuclease activity"/>
    <property type="evidence" value="ECO:0007669"/>
    <property type="project" value="TreeGrafter"/>
</dbReference>
<dbReference type="GO" id="GO:0000287">
    <property type="term" value="F:magnesium ion binding"/>
    <property type="evidence" value="ECO:0007669"/>
    <property type="project" value="UniProtKB-UniRule"/>
</dbReference>
<dbReference type="GO" id="GO:0004654">
    <property type="term" value="F:polyribonucleotide nucleotidyltransferase activity"/>
    <property type="evidence" value="ECO:0007669"/>
    <property type="project" value="UniProtKB-UniRule"/>
</dbReference>
<dbReference type="GO" id="GO:0003723">
    <property type="term" value="F:RNA binding"/>
    <property type="evidence" value="ECO:0007669"/>
    <property type="project" value="UniProtKB-UniRule"/>
</dbReference>
<dbReference type="GO" id="GO:0006402">
    <property type="term" value="P:mRNA catabolic process"/>
    <property type="evidence" value="ECO:0007669"/>
    <property type="project" value="UniProtKB-UniRule"/>
</dbReference>
<dbReference type="GO" id="GO:0006396">
    <property type="term" value="P:RNA processing"/>
    <property type="evidence" value="ECO:0007669"/>
    <property type="project" value="InterPro"/>
</dbReference>
<dbReference type="CDD" id="cd02393">
    <property type="entry name" value="KH-I_PNPase"/>
    <property type="match status" value="1"/>
</dbReference>
<dbReference type="CDD" id="cd11363">
    <property type="entry name" value="RNase_PH_PNPase_1"/>
    <property type="match status" value="1"/>
</dbReference>
<dbReference type="CDD" id="cd11364">
    <property type="entry name" value="RNase_PH_PNPase_2"/>
    <property type="match status" value="1"/>
</dbReference>
<dbReference type="CDD" id="cd04472">
    <property type="entry name" value="S1_PNPase"/>
    <property type="match status" value="1"/>
</dbReference>
<dbReference type="FunFam" id="2.40.50.140:FF:000023">
    <property type="entry name" value="Polyribonucleotide nucleotidyltransferase"/>
    <property type="match status" value="1"/>
</dbReference>
<dbReference type="FunFam" id="3.30.1370.10:FF:000001">
    <property type="entry name" value="Polyribonucleotide nucleotidyltransferase"/>
    <property type="match status" value="1"/>
</dbReference>
<dbReference type="FunFam" id="3.30.230.70:FF:000001">
    <property type="entry name" value="Polyribonucleotide nucleotidyltransferase"/>
    <property type="match status" value="1"/>
</dbReference>
<dbReference type="FunFam" id="3.30.230.70:FF:000002">
    <property type="entry name" value="Polyribonucleotide nucleotidyltransferase"/>
    <property type="match status" value="1"/>
</dbReference>
<dbReference type="Gene3D" id="3.30.230.70">
    <property type="entry name" value="GHMP Kinase, N-terminal domain"/>
    <property type="match status" value="2"/>
</dbReference>
<dbReference type="Gene3D" id="3.30.1370.10">
    <property type="entry name" value="K Homology domain, type 1"/>
    <property type="match status" value="1"/>
</dbReference>
<dbReference type="Gene3D" id="2.40.50.140">
    <property type="entry name" value="Nucleic acid-binding proteins"/>
    <property type="match status" value="1"/>
</dbReference>
<dbReference type="HAMAP" id="MF_01595">
    <property type="entry name" value="PNPase"/>
    <property type="match status" value="1"/>
</dbReference>
<dbReference type="InterPro" id="IPR001247">
    <property type="entry name" value="ExoRNase_PH_dom1"/>
</dbReference>
<dbReference type="InterPro" id="IPR015847">
    <property type="entry name" value="ExoRNase_PH_dom2"/>
</dbReference>
<dbReference type="InterPro" id="IPR036345">
    <property type="entry name" value="ExoRNase_PH_dom2_sf"/>
</dbReference>
<dbReference type="InterPro" id="IPR004087">
    <property type="entry name" value="KH_dom"/>
</dbReference>
<dbReference type="InterPro" id="IPR004088">
    <property type="entry name" value="KH_dom_type_1"/>
</dbReference>
<dbReference type="InterPro" id="IPR036612">
    <property type="entry name" value="KH_dom_type_1_sf"/>
</dbReference>
<dbReference type="InterPro" id="IPR012340">
    <property type="entry name" value="NA-bd_OB-fold"/>
</dbReference>
<dbReference type="InterPro" id="IPR012162">
    <property type="entry name" value="PNPase"/>
</dbReference>
<dbReference type="InterPro" id="IPR027408">
    <property type="entry name" value="PNPase/RNase_PH_dom_sf"/>
</dbReference>
<dbReference type="InterPro" id="IPR015848">
    <property type="entry name" value="PNPase_PH_RNA-bd_bac/org-type"/>
</dbReference>
<dbReference type="InterPro" id="IPR020568">
    <property type="entry name" value="Ribosomal_Su5_D2-typ_SF"/>
</dbReference>
<dbReference type="InterPro" id="IPR003029">
    <property type="entry name" value="S1_domain"/>
</dbReference>
<dbReference type="NCBIfam" id="TIGR03591">
    <property type="entry name" value="polynuc_phos"/>
    <property type="match status" value="1"/>
</dbReference>
<dbReference type="NCBIfam" id="NF008805">
    <property type="entry name" value="PRK11824.1"/>
    <property type="match status" value="1"/>
</dbReference>
<dbReference type="PANTHER" id="PTHR11252">
    <property type="entry name" value="POLYRIBONUCLEOTIDE NUCLEOTIDYLTRANSFERASE"/>
    <property type="match status" value="1"/>
</dbReference>
<dbReference type="PANTHER" id="PTHR11252:SF0">
    <property type="entry name" value="POLYRIBONUCLEOTIDE NUCLEOTIDYLTRANSFERASE 1, MITOCHONDRIAL"/>
    <property type="match status" value="1"/>
</dbReference>
<dbReference type="Pfam" id="PF00013">
    <property type="entry name" value="KH_1"/>
    <property type="match status" value="1"/>
</dbReference>
<dbReference type="Pfam" id="PF03726">
    <property type="entry name" value="PNPase"/>
    <property type="match status" value="1"/>
</dbReference>
<dbReference type="Pfam" id="PF01138">
    <property type="entry name" value="RNase_PH"/>
    <property type="match status" value="2"/>
</dbReference>
<dbReference type="Pfam" id="PF03725">
    <property type="entry name" value="RNase_PH_C"/>
    <property type="match status" value="2"/>
</dbReference>
<dbReference type="Pfam" id="PF00575">
    <property type="entry name" value="S1"/>
    <property type="match status" value="1"/>
</dbReference>
<dbReference type="PIRSF" id="PIRSF005499">
    <property type="entry name" value="PNPase"/>
    <property type="match status" value="1"/>
</dbReference>
<dbReference type="SMART" id="SM00322">
    <property type="entry name" value="KH"/>
    <property type="match status" value="1"/>
</dbReference>
<dbReference type="SMART" id="SM00316">
    <property type="entry name" value="S1"/>
    <property type="match status" value="1"/>
</dbReference>
<dbReference type="SUPFAM" id="SSF54791">
    <property type="entry name" value="Eukaryotic type KH-domain (KH-domain type I)"/>
    <property type="match status" value="1"/>
</dbReference>
<dbReference type="SUPFAM" id="SSF50249">
    <property type="entry name" value="Nucleic acid-binding proteins"/>
    <property type="match status" value="1"/>
</dbReference>
<dbReference type="SUPFAM" id="SSF55666">
    <property type="entry name" value="Ribonuclease PH domain 2-like"/>
    <property type="match status" value="2"/>
</dbReference>
<dbReference type="SUPFAM" id="SSF54211">
    <property type="entry name" value="Ribosomal protein S5 domain 2-like"/>
    <property type="match status" value="2"/>
</dbReference>
<dbReference type="PROSITE" id="PS50084">
    <property type="entry name" value="KH_TYPE_1"/>
    <property type="match status" value="1"/>
</dbReference>
<dbReference type="PROSITE" id="PS50126">
    <property type="entry name" value="S1"/>
    <property type="match status" value="1"/>
</dbReference>
<gene>
    <name evidence="1" type="primary">pnp</name>
    <name type="ordered locus">BCAH820_3818</name>
</gene>
<keyword id="KW-0963">Cytoplasm</keyword>
<keyword id="KW-0460">Magnesium</keyword>
<keyword id="KW-0479">Metal-binding</keyword>
<keyword id="KW-0548">Nucleotidyltransferase</keyword>
<keyword id="KW-0694">RNA-binding</keyword>
<keyword id="KW-0808">Transferase</keyword>